<organism>
    <name type="scientific">Rickettsia bellii (strain OSU 85-389)</name>
    <dbReference type="NCBI Taxonomy" id="391896"/>
    <lineage>
        <taxon>Bacteria</taxon>
        <taxon>Pseudomonadati</taxon>
        <taxon>Pseudomonadota</taxon>
        <taxon>Alphaproteobacteria</taxon>
        <taxon>Rickettsiales</taxon>
        <taxon>Rickettsiaceae</taxon>
        <taxon>Rickettsieae</taxon>
        <taxon>Rickettsia</taxon>
        <taxon>belli group</taxon>
    </lineage>
</organism>
<sequence length="321" mass="36042">MIKLLYPKFWQKRNIIAYILFPISWIYQFLGFLRHVFVRPVILPAKVICVGNCSVGGTGKTQIVMYLANLLKTQNIDFVIVTKAYGSNLKEATIVKAEHSTLEVGDESVILAKHGTVIATKNIKQILPLIHELKPSIIIVDDFLQNPYFHKDITIVSVDRQRLFGNGFLIPAGPLREYPNRALSAADLVFLVGNNSGGIPVSLASYANKLIQAQIVASSDIDKNKNYFAFSGIGNPERFFLTLKNYGLNIVGYKIFPDHYNYLQEDLENLSLLAKTNNATLITTRKDYVKIGDSSDIIVCLDVKLSINNPNLLYEKIFKKD</sequence>
<reference key="1">
    <citation type="submission" date="2007-09" db="EMBL/GenBank/DDBJ databases">
        <title>Complete genome sequencing of Rickettsia bellii.</title>
        <authorList>
            <person name="Madan A."/>
            <person name="Lee H."/>
            <person name="Madan A."/>
            <person name="Yoon J.-G."/>
            <person name="Ryu G.-Y."/>
            <person name="Dasch G."/>
            <person name="Ereemeva M."/>
        </authorList>
    </citation>
    <scope>NUCLEOTIDE SEQUENCE [LARGE SCALE GENOMIC DNA]</scope>
    <source>
        <strain>OSU 85-389</strain>
    </source>
</reference>
<protein>
    <recommendedName>
        <fullName evidence="1">Tetraacyldisaccharide 4'-kinase</fullName>
        <ecNumber evidence="1">2.7.1.130</ecNumber>
    </recommendedName>
    <alternativeName>
        <fullName evidence="1">Lipid A 4'-kinase</fullName>
    </alternativeName>
</protein>
<dbReference type="EC" id="2.7.1.130" evidence="1"/>
<dbReference type="EMBL" id="CP000849">
    <property type="protein sequence ID" value="ABV79695.1"/>
    <property type="molecule type" value="Genomic_DNA"/>
</dbReference>
<dbReference type="RefSeq" id="WP_012152196.1">
    <property type="nucleotide sequence ID" value="NC_009883.1"/>
</dbReference>
<dbReference type="SMR" id="A8GXU5"/>
<dbReference type="KEGG" id="rbo:A1I_06945"/>
<dbReference type="HOGENOM" id="CLU_038816_0_0_5"/>
<dbReference type="UniPathway" id="UPA00359">
    <property type="reaction ID" value="UER00482"/>
</dbReference>
<dbReference type="GO" id="GO:0005886">
    <property type="term" value="C:plasma membrane"/>
    <property type="evidence" value="ECO:0007669"/>
    <property type="project" value="TreeGrafter"/>
</dbReference>
<dbReference type="GO" id="GO:0005524">
    <property type="term" value="F:ATP binding"/>
    <property type="evidence" value="ECO:0007669"/>
    <property type="project" value="UniProtKB-UniRule"/>
</dbReference>
<dbReference type="GO" id="GO:0009029">
    <property type="term" value="F:tetraacyldisaccharide 4'-kinase activity"/>
    <property type="evidence" value="ECO:0007669"/>
    <property type="project" value="UniProtKB-UniRule"/>
</dbReference>
<dbReference type="GO" id="GO:0009245">
    <property type="term" value="P:lipid A biosynthetic process"/>
    <property type="evidence" value="ECO:0007669"/>
    <property type="project" value="UniProtKB-UniRule"/>
</dbReference>
<dbReference type="GO" id="GO:0009244">
    <property type="term" value="P:lipopolysaccharide core region biosynthetic process"/>
    <property type="evidence" value="ECO:0007669"/>
    <property type="project" value="TreeGrafter"/>
</dbReference>
<dbReference type="HAMAP" id="MF_00409">
    <property type="entry name" value="LpxK"/>
    <property type="match status" value="1"/>
</dbReference>
<dbReference type="InterPro" id="IPR003758">
    <property type="entry name" value="LpxK"/>
</dbReference>
<dbReference type="InterPro" id="IPR027417">
    <property type="entry name" value="P-loop_NTPase"/>
</dbReference>
<dbReference type="NCBIfam" id="TIGR00682">
    <property type="entry name" value="lpxK"/>
    <property type="match status" value="1"/>
</dbReference>
<dbReference type="PANTHER" id="PTHR42724">
    <property type="entry name" value="TETRAACYLDISACCHARIDE 4'-KINASE"/>
    <property type="match status" value="1"/>
</dbReference>
<dbReference type="PANTHER" id="PTHR42724:SF1">
    <property type="entry name" value="TETRAACYLDISACCHARIDE 4'-KINASE, MITOCHONDRIAL-RELATED"/>
    <property type="match status" value="1"/>
</dbReference>
<dbReference type="Pfam" id="PF02606">
    <property type="entry name" value="LpxK"/>
    <property type="match status" value="1"/>
</dbReference>
<dbReference type="SUPFAM" id="SSF52540">
    <property type="entry name" value="P-loop containing nucleoside triphosphate hydrolases"/>
    <property type="match status" value="1"/>
</dbReference>
<name>LPXK_RICB8</name>
<gene>
    <name evidence="1" type="primary">lpxK</name>
    <name type="ordered locus">A1I_06945</name>
</gene>
<accession>A8GXU5</accession>
<evidence type="ECO:0000255" key="1">
    <source>
        <dbReference type="HAMAP-Rule" id="MF_00409"/>
    </source>
</evidence>
<keyword id="KW-0067">ATP-binding</keyword>
<keyword id="KW-0418">Kinase</keyword>
<keyword id="KW-0441">Lipid A biosynthesis</keyword>
<keyword id="KW-0444">Lipid biosynthesis</keyword>
<keyword id="KW-0443">Lipid metabolism</keyword>
<keyword id="KW-0547">Nucleotide-binding</keyword>
<keyword id="KW-0808">Transferase</keyword>
<comment type="function">
    <text evidence="1">Transfers the gamma-phosphate of ATP to the 4'-position of a tetraacyldisaccharide 1-phosphate intermediate (termed DS-1-P) to form tetraacyldisaccharide 1,4'-bis-phosphate (lipid IVA).</text>
</comment>
<comment type="catalytic activity">
    <reaction evidence="1">
        <text>a lipid A disaccharide + ATP = a lipid IVA + ADP + H(+)</text>
        <dbReference type="Rhea" id="RHEA:67840"/>
        <dbReference type="ChEBI" id="CHEBI:15378"/>
        <dbReference type="ChEBI" id="CHEBI:30616"/>
        <dbReference type="ChEBI" id="CHEBI:176343"/>
        <dbReference type="ChEBI" id="CHEBI:176425"/>
        <dbReference type="ChEBI" id="CHEBI:456216"/>
        <dbReference type="EC" id="2.7.1.130"/>
    </reaction>
</comment>
<comment type="pathway">
    <text evidence="1">Glycolipid biosynthesis; lipid IV(A) biosynthesis; lipid IV(A) from (3R)-3-hydroxytetradecanoyl-[acyl-carrier-protein] and UDP-N-acetyl-alpha-D-glucosamine: step 6/6.</text>
</comment>
<comment type="similarity">
    <text evidence="1">Belongs to the LpxK family.</text>
</comment>
<proteinExistence type="inferred from homology"/>
<feature type="chain" id="PRO_1000049903" description="Tetraacyldisaccharide 4'-kinase">
    <location>
        <begin position="1"/>
        <end position="321"/>
    </location>
</feature>
<feature type="binding site" evidence="1">
    <location>
        <begin position="54"/>
        <end position="61"/>
    </location>
    <ligand>
        <name>ATP</name>
        <dbReference type="ChEBI" id="CHEBI:30616"/>
    </ligand>
</feature>